<reference key="1">
    <citation type="journal article" date="2007" name="PLoS ONE">
        <title>A glimpse of streptococcal toxic shock syndrome from comparative genomics of S. suis 2 Chinese isolates.</title>
        <authorList>
            <person name="Chen C."/>
            <person name="Tang J."/>
            <person name="Dong W."/>
            <person name="Wang C."/>
            <person name="Feng Y."/>
            <person name="Wang J."/>
            <person name="Zheng F."/>
            <person name="Pan X."/>
            <person name="Liu D."/>
            <person name="Li M."/>
            <person name="Song Y."/>
            <person name="Zhu X."/>
            <person name="Sun H."/>
            <person name="Feng T."/>
            <person name="Guo Z."/>
            <person name="Ju A."/>
            <person name="Ge J."/>
            <person name="Dong Y."/>
            <person name="Sun W."/>
            <person name="Jiang Y."/>
            <person name="Wang J."/>
            <person name="Yan J."/>
            <person name="Yang H."/>
            <person name="Wang X."/>
            <person name="Gao G.F."/>
            <person name="Yang R."/>
            <person name="Wang J."/>
            <person name="Yu J."/>
        </authorList>
    </citation>
    <scope>NUCLEOTIDE SEQUENCE [LARGE SCALE GENOMIC DNA]</scope>
    <source>
        <strain>05ZYH33</strain>
    </source>
</reference>
<feature type="chain" id="PRO_1000021353" description="Shikimate dehydrogenase (NADP(+))">
    <location>
        <begin position="1"/>
        <end position="289"/>
    </location>
</feature>
<feature type="active site" description="Proton acceptor" evidence="1">
    <location>
        <position position="71"/>
    </location>
</feature>
<feature type="binding site" evidence="1">
    <location>
        <begin position="20"/>
        <end position="22"/>
    </location>
    <ligand>
        <name>shikimate</name>
        <dbReference type="ChEBI" id="CHEBI:36208"/>
    </ligand>
</feature>
<feature type="binding site" evidence="1">
    <location>
        <position position="67"/>
    </location>
    <ligand>
        <name>shikimate</name>
        <dbReference type="ChEBI" id="CHEBI:36208"/>
    </ligand>
</feature>
<feature type="binding site" evidence="1">
    <location>
        <position position="83"/>
    </location>
    <ligand>
        <name>NADP(+)</name>
        <dbReference type="ChEBI" id="CHEBI:58349"/>
    </ligand>
</feature>
<feature type="binding site" evidence="1">
    <location>
        <position position="92"/>
    </location>
    <ligand>
        <name>shikimate</name>
        <dbReference type="ChEBI" id="CHEBI:36208"/>
    </ligand>
</feature>
<feature type="binding site" evidence="1">
    <location>
        <position position="107"/>
    </location>
    <ligand>
        <name>shikimate</name>
        <dbReference type="ChEBI" id="CHEBI:36208"/>
    </ligand>
</feature>
<feature type="binding site" evidence="1">
    <location>
        <begin position="132"/>
        <end position="136"/>
    </location>
    <ligand>
        <name>NADP(+)</name>
        <dbReference type="ChEBI" id="CHEBI:58349"/>
    </ligand>
</feature>
<feature type="binding site" evidence="1">
    <location>
        <position position="230"/>
    </location>
    <ligand>
        <name>NADP(+)</name>
        <dbReference type="ChEBI" id="CHEBI:58349"/>
    </ligand>
</feature>
<feature type="binding site" evidence="1">
    <location>
        <position position="232"/>
    </location>
    <ligand>
        <name>shikimate</name>
        <dbReference type="ChEBI" id="CHEBI:36208"/>
    </ligand>
</feature>
<feature type="binding site" evidence="1">
    <location>
        <position position="253"/>
    </location>
    <ligand>
        <name>NADP(+)</name>
        <dbReference type="ChEBI" id="CHEBI:58349"/>
    </ligand>
</feature>
<keyword id="KW-0028">Amino-acid biosynthesis</keyword>
<keyword id="KW-0057">Aromatic amino acid biosynthesis</keyword>
<keyword id="KW-0521">NADP</keyword>
<keyword id="KW-0560">Oxidoreductase</keyword>
<sequence>MNIDGYTRLAAVVAKPIKHSISPFIHNLAFKETGVNGVYVAWEIPEEDLAVTLENIKRYDMFGINLSMPYKQAVIPYLDSLTDSARLIGAVNTVIHQDGLLIGHNTDGIGFFKSLEKLRGFQVRNKRLTILGGGGASTAIIAQATLDGAKEITIFCRQQSLERTQASLTPIARATGVPMQILALDDSQLLQEHITNSDLLVNGTSVGMDGYSQPVPSTIRFPENLLVADVIYQPFETPLLKLAQSQGNPTINGLGMLLFQAAEAFQSWTGQEMPTDLIWDQLVQKYDIK</sequence>
<comment type="function">
    <text evidence="1">Involved in the biosynthesis of the chorismate, which leads to the biosynthesis of aromatic amino acids. Catalyzes the reversible NADPH linked reduction of 3-dehydroshikimate (DHSA) to yield shikimate (SA).</text>
</comment>
<comment type="catalytic activity">
    <reaction evidence="1">
        <text>shikimate + NADP(+) = 3-dehydroshikimate + NADPH + H(+)</text>
        <dbReference type="Rhea" id="RHEA:17737"/>
        <dbReference type="ChEBI" id="CHEBI:15378"/>
        <dbReference type="ChEBI" id="CHEBI:16630"/>
        <dbReference type="ChEBI" id="CHEBI:36208"/>
        <dbReference type="ChEBI" id="CHEBI:57783"/>
        <dbReference type="ChEBI" id="CHEBI:58349"/>
        <dbReference type="EC" id="1.1.1.25"/>
    </reaction>
</comment>
<comment type="pathway">
    <text evidence="1">Metabolic intermediate biosynthesis; chorismate biosynthesis; chorismate from D-erythrose 4-phosphate and phosphoenolpyruvate: step 4/7.</text>
</comment>
<comment type="subunit">
    <text evidence="1">Homodimer.</text>
</comment>
<comment type="similarity">
    <text evidence="1">Belongs to the shikimate dehydrogenase family.</text>
</comment>
<evidence type="ECO:0000255" key="1">
    <source>
        <dbReference type="HAMAP-Rule" id="MF_00222"/>
    </source>
</evidence>
<gene>
    <name evidence="1" type="primary">aroE</name>
    <name type="ordered locus">SSU05_1251</name>
</gene>
<dbReference type="EC" id="1.1.1.25" evidence="1"/>
<dbReference type="EMBL" id="CP000407">
    <property type="protein sequence ID" value="ABP90217.1"/>
    <property type="molecule type" value="Genomic_DNA"/>
</dbReference>
<dbReference type="SMR" id="A4VVS8"/>
<dbReference type="STRING" id="391295.SSU05_1251"/>
<dbReference type="KEGG" id="ssu:SSU05_1251"/>
<dbReference type="eggNOG" id="COG0169">
    <property type="taxonomic scope" value="Bacteria"/>
</dbReference>
<dbReference type="HOGENOM" id="CLU_044063_4_4_9"/>
<dbReference type="UniPathway" id="UPA00053">
    <property type="reaction ID" value="UER00087"/>
</dbReference>
<dbReference type="GO" id="GO:0050661">
    <property type="term" value="F:NADP binding"/>
    <property type="evidence" value="ECO:0007669"/>
    <property type="project" value="InterPro"/>
</dbReference>
<dbReference type="GO" id="GO:0004764">
    <property type="term" value="F:shikimate 3-dehydrogenase (NADP+) activity"/>
    <property type="evidence" value="ECO:0007669"/>
    <property type="project" value="UniProtKB-UniRule"/>
</dbReference>
<dbReference type="GO" id="GO:0008652">
    <property type="term" value="P:amino acid biosynthetic process"/>
    <property type="evidence" value="ECO:0007669"/>
    <property type="project" value="UniProtKB-KW"/>
</dbReference>
<dbReference type="GO" id="GO:0009073">
    <property type="term" value="P:aromatic amino acid family biosynthetic process"/>
    <property type="evidence" value="ECO:0007669"/>
    <property type="project" value="UniProtKB-KW"/>
</dbReference>
<dbReference type="GO" id="GO:0009423">
    <property type="term" value="P:chorismate biosynthetic process"/>
    <property type="evidence" value="ECO:0007669"/>
    <property type="project" value="UniProtKB-UniRule"/>
</dbReference>
<dbReference type="GO" id="GO:0019632">
    <property type="term" value="P:shikimate metabolic process"/>
    <property type="evidence" value="ECO:0007669"/>
    <property type="project" value="InterPro"/>
</dbReference>
<dbReference type="CDD" id="cd01065">
    <property type="entry name" value="NAD_bind_Shikimate_DH"/>
    <property type="match status" value="1"/>
</dbReference>
<dbReference type="Gene3D" id="3.40.50.10860">
    <property type="entry name" value="Leucine Dehydrogenase, chain A, domain 1"/>
    <property type="match status" value="1"/>
</dbReference>
<dbReference type="Gene3D" id="3.40.50.720">
    <property type="entry name" value="NAD(P)-binding Rossmann-like Domain"/>
    <property type="match status" value="1"/>
</dbReference>
<dbReference type="HAMAP" id="MF_00222">
    <property type="entry name" value="Shikimate_DH_AroE"/>
    <property type="match status" value="1"/>
</dbReference>
<dbReference type="InterPro" id="IPR046346">
    <property type="entry name" value="Aminoacid_DH-like_N_sf"/>
</dbReference>
<dbReference type="InterPro" id="IPR036291">
    <property type="entry name" value="NAD(P)-bd_dom_sf"/>
</dbReference>
<dbReference type="InterPro" id="IPR041121">
    <property type="entry name" value="SDH_C"/>
</dbReference>
<dbReference type="InterPro" id="IPR011342">
    <property type="entry name" value="Shikimate_DH"/>
</dbReference>
<dbReference type="InterPro" id="IPR013708">
    <property type="entry name" value="Shikimate_DH-bd_N"/>
</dbReference>
<dbReference type="InterPro" id="IPR022893">
    <property type="entry name" value="Shikimate_DH_fam"/>
</dbReference>
<dbReference type="NCBIfam" id="TIGR00507">
    <property type="entry name" value="aroE"/>
    <property type="match status" value="1"/>
</dbReference>
<dbReference type="NCBIfam" id="NF001315">
    <property type="entry name" value="PRK00258.2-4"/>
    <property type="match status" value="1"/>
</dbReference>
<dbReference type="PANTHER" id="PTHR21089:SF1">
    <property type="entry name" value="BIFUNCTIONAL 3-DEHYDROQUINATE DEHYDRATASE_SHIKIMATE DEHYDROGENASE, CHLOROPLASTIC"/>
    <property type="match status" value="1"/>
</dbReference>
<dbReference type="PANTHER" id="PTHR21089">
    <property type="entry name" value="SHIKIMATE DEHYDROGENASE"/>
    <property type="match status" value="1"/>
</dbReference>
<dbReference type="Pfam" id="PF18317">
    <property type="entry name" value="SDH_C"/>
    <property type="match status" value="1"/>
</dbReference>
<dbReference type="Pfam" id="PF08501">
    <property type="entry name" value="Shikimate_dh_N"/>
    <property type="match status" value="1"/>
</dbReference>
<dbReference type="SUPFAM" id="SSF53223">
    <property type="entry name" value="Aminoacid dehydrogenase-like, N-terminal domain"/>
    <property type="match status" value="1"/>
</dbReference>
<dbReference type="SUPFAM" id="SSF51735">
    <property type="entry name" value="NAD(P)-binding Rossmann-fold domains"/>
    <property type="match status" value="1"/>
</dbReference>
<name>AROE_STRSY</name>
<accession>A4VVS8</accession>
<organism>
    <name type="scientific">Streptococcus suis (strain 05ZYH33)</name>
    <dbReference type="NCBI Taxonomy" id="391295"/>
    <lineage>
        <taxon>Bacteria</taxon>
        <taxon>Bacillati</taxon>
        <taxon>Bacillota</taxon>
        <taxon>Bacilli</taxon>
        <taxon>Lactobacillales</taxon>
        <taxon>Streptococcaceae</taxon>
        <taxon>Streptococcus</taxon>
    </lineage>
</organism>
<proteinExistence type="inferred from homology"/>
<protein>
    <recommendedName>
        <fullName evidence="1">Shikimate dehydrogenase (NADP(+))</fullName>
        <shortName evidence="1">SDH</shortName>
        <ecNumber evidence="1">1.1.1.25</ecNumber>
    </recommendedName>
</protein>